<evidence type="ECO:0000255" key="1">
    <source>
        <dbReference type="HAMAP-Rule" id="MF_00226"/>
    </source>
</evidence>
<accession>A9BHX8</accession>
<gene>
    <name type="ordered locus">Pmob_1389</name>
</gene>
<proteinExistence type="inferred from homology"/>
<feature type="chain" id="PRO_0000336516" description="CinA-like protein">
    <location>
        <begin position="1"/>
        <end position="403"/>
    </location>
</feature>
<comment type="similarity">
    <text evidence="1">Belongs to the CinA family.</text>
</comment>
<dbReference type="EMBL" id="CP000879">
    <property type="protein sequence ID" value="ABX32093.1"/>
    <property type="molecule type" value="Genomic_DNA"/>
</dbReference>
<dbReference type="RefSeq" id="WP_012209192.1">
    <property type="nucleotide sequence ID" value="NC_010003.1"/>
</dbReference>
<dbReference type="SMR" id="A9BHX8"/>
<dbReference type="STRING" id="403833.Pmob_1389"/>
<dbReference type="KEGG" id="pmo:Pmob_1389"/>
<dbReference type="eggNOG" id="COG1058">
    <property type="taxonomic scope" value="Bacteria"/>
</dbReference>
<dbReference type="eggNOG" id="COG1546">
    <property type="taxonomic scope" value="Bacteria"/>
</dbReference>
<dbReference type="HOGENOM" id="CLU_030805_9_3_0"/>
<dbReference type="OrthoDB" id="9801454at2"/>
<dbReference type="Proteomes" id="UP000000789">
    <property type="component" value="Chromosome"/>
</dbReference>
<dbReference type="CDD" id="cd00885">
    <property type="entry name" value="cinA"/>
    <property type="match status" value="1"/>
</dbReference>
<dbReference type="Gene3D" id="3.90.950.20">
    <property type="entry name" value="CinA-like"/>
    <property type="match status" value="1"/>
</dbReference>
<dbReference type="Gene3D" id="3.40.980.10">
    <property type="entry name" value="MoaB/Mog-like domain"/>
    <property type="match status" value="1"/>
</dbReference>
<dbReference type="HAMAP" id="MF_00226_B">
    <property type="entry name" value="CinA_B"/>
    <property type="match status" value="1"/>
</dbReference>
<dbReference type="InterPro" id="IPR050101">
    <property type="entry name" value="CinA"/>
</dbReference>
<dbReference type="InterPro" id="IPR036653">
    <property type="entry name" value="CinA-like_C"/>
</dbReference>
<dbReference type="InterPro" id="IPR008136">
    <property type="entry name" value="CinA_C"/>
</dbReference>
<dbReference type="InterPro" id="IPR008135">
    <property type="entry name" value="Competence-induced_CinA"/>
</dbReference>
<dbReference type="InterPro" id="IPR036425">
    <property type="entry name" value="MoaB/Mog-like_dom_sf"/>
</dbReference>
<dbReference type="InterPro" id="IPR001453">
    <property type="entry name" value="MoaB/Mog_dom"/>
</dbReference>
<dbReference type="NCBIfam" id="TIGR00200">
    <property type="entry name" value="cinA_nterm"/>
    <property type="match status" value="1"/>
</dbReference>
<dbReference type="NCBIfam" id="TIGR00199">
    <property type="entry name" value="PncC_domain"/>
    <property type="match status" value="1"/>
</dbReference>
<dbReference type="PANTHER" id="PTHR13939">
    <property type="entry name" value="NICOTINAMIDE-NUCLEOTIDE AMIDOHYDROLASE PNCC"/>
    <property type="match status" value="1"/>
</dbReference>
<dbReference type="PANTHER" id="PTHR13939:SF0">
    <property type="entry name" value="NMN AMIDOHYDROLASE-LIKE PROTEIN YFAY"/>
    <property type="match status" value="1"/>
</dbReference>
<dbReference type="Pfam" id="PF02464">
    <property type="entry name" value="CinA"/>
    <property type="match status" value="1"/>
</dbReference>
<dbReference type="Pfam" id="PF00994">
    <property type="entry name" value="MoCF_biosynth"/>
    <property type="match status" value="1"/>
</dbReference>
<dbReference type="PIRSF" id="PIRSF006728">
    <property type="entry name" value="CinA"/>
    <property type="match status" value="1"/>
</dbReference>
<dbReference type="SMART" id="SM00852">
    <property type="entry name" value="MoCF_biosynth"/>
    <property type="match status" value="1"/>
</dbReference>
<dbReference type="SUPFAM" id="SSF142433">
    <property type="entry name" value="CinA-like"/>
    <property type="match status" value="1"/>
</dbReference>
<dbReference type="SUPFAM" id="SSF53218">
    <property type="entry name" value="Molybdenum cofactor biosynthesis proteins"/>
    <property type="match status" value="1"/>
</dbReference>
<reference key="1">
    <citation type="submission" date="2007-11" db="EMBL/GenBank/DDBJ databases">
        <title>Complete sequence of Petroga mobilis SJ95.</title>
        <authorList>
            <consortium name="US DOE Joint Genome Institute"/>
            <person name="Copeland A."/>
            <person name="Lucas S."/>
            <person name="Lapidus A."/>
            <person name="Barry K."/>
            <person name="Glavina del Rio T."/>
            <person name="Dalin E."/>
            <person name="Tice H."/>
            <person name="Pitluck S."/>
            <person name="Meincke L."/>
            <person name="Brettin T."/>
            <person name="Bruce D."/>
            <person name="Detter J.C."/>
            <person name="Han C."/>
            <person name="Kuske C.R."/>
            <person name="Schmutz J."/>
            <person name="Larimer F."/>
            <person name="Land M."/>
            <person name="Hauser L."/>
            <person name="Kyrpides N."/>
            <person name="Mikhailova N."/>
            <person name="Noll K."/>
            <person name="Richardson P."/>
        </authorList>
    </citation>
    <scope>NUCLEOTIDE SEQUENCE [LARGE SCALE GENOMIC DNA]</scope>
    <source>
        <strain>DSM 10674 / SJ95</strain>
    </source>
</reference>
<organism>
    <name type="scientific">Petrotoga mobilis (strain DSM 10674 / SJ95)</name>
    <dbReference type="NCBI Taxonomy" id="403833"/>
    <lineage>
        <taxon>Bacteria</taxon>
        <taxon>Thermotogati</taxon>
        <taxon>Thermotogota</taxon>
        <taxon>Thermotogae</taxon>
        <taxon>Petrotogales</taxon>
        <taxon>Petrotogaceae</taxon>
        <taxon>Petrotoga</taxon>
    </lineage>
</organism>
<name>CINAL_PETMO</name>
<protein>
    <recommendedName>
        <fullName evidence="1">CinA-like protein</fullName>
    </recommendedName>
</protein>
<sequence>MKSCIIATGNELTEGIILDKNSKYLAERLKSVGYDTLKITNVKDDLSLIKLSIEESLEMCDIIFLTGGLGPTQDDLTVQAVSESCNIDIVFNEELFEKIKKYYYNKTGKYLSILKKQSYVLKNAEILQNPVGSAPGQKVHFNGHTIYLLPGPYNEMKAIFDTHIYDELKSNMKNDHVEYSLYFYGLTEAELMQEVSVILKNFDYSTKIEEYIGPSLRIRMQKNDDFEPILEKILSQFSRYFIGFKSLEITLFDVLMKSSKTLSFAESCTGGMLSDTLVSIPGASNVFKGSLVTYSNESKVRLLDVKKETIEKFGAVSEETVKEMAYGLKKIMESDICVSVSGIAGPSLGSEQKPVGTVWYGFLINEDFFALKNVFTGDRDEIRKRATYFAFWNILDLVRKRYL</sequence>